<protein>
    <recommendedName>
        <fullName>Protein naked cuticle homolog</fullName>
    </recommendedName>
</protein>
<evidence type="ECO:0000250" key="1"/>
<evidence type="ECO:0000250" key="2">
    <source>
        <dbReference type="UniProtKB" id="Q9VVV9"/>
    </source>
</evidence>
<evidence type="ECO:0000255" key="3">
    <source>
        <dbReference type="PROSITE-ProRule" id="PRU00448"/>
    </source>
</evidence>
<evidence type="ECO:0000256" key="4">
    <source>
        <dbReference type="SAM" id="MobiDB-lite"/>
    </source>
</evidence>
<evidence type="ECO:0000305" key="5"/>
<proteinExistence type="evidence at transcript level"/>
<feature type="chain" id="PRO_0000301997" description="Protein naked cuticle homolog">
    <location>
        <begin position="1"/>
        <end position="886"/>
    </location>
</feature>
<feature type="domain" description="EF-hand" evidence="3">
    <location>
        <begin position="181"/>
        <end position="216"/>
    </location>
</feature>
<feature type="region of interest" description="Disordered" evidence="4">
    <location>
        <begin position="62"/>
        <end position="149"/>
    </location>
</feature>
<feature type="region of interest" description="Disordered" evidence="4">
    <location>
        <begin position="267"/>
        <end position="286"/>
    </location>
</feature>
<feature type="region of interest" description="Disordered" evidence="4">
    <location>
        <begin position="307"/>
        <end position="338"/>
    </location>
</feature>
<feature type="region of interest" description="Required for nuclear localization and inhibition of Wnt signaling" evidence="1">
    <location>
        <begin position="554"/>
        <end position="583"/>
    </location>
</feature>
<feature type="region of interest" description="Disordered" evidence="4">
    <location>
        <begin position="789"/>
        <end position="861"/>
    </location>
</feature>
<feature type="compositionally biased region" description="Low complexity" evidence="4">
    <location>
        <begin position="62"/>
        <end position="79"/>
    </location>
</feature>
<feature type="compositionally biased region" description="Basic residues" evidence="4">
    <location>
        <begin position="80"/>
        <end position="92"/>
    </location>
</feature>
<feature type="compositionally biased region" description="Low complexity" evidence="4">
    <location>
        <begin position="93"/>
        <end position="112"/>
    </location>
</feature>
<feature type="compositionally biased region" description="Gly residues" evidence="4">
    <location>
        <begin position="132"/>
        <end position="145"/>
    </location>
</feature>
<feature type="compositionally biased region" description="Basic residues" evidence="4">
    <location>
        <begin position="319"/>
        <end position="328"/>
    </location>
</feature>
<feature type="compositionally biased region" description="Low complexity" evidence="4">
    <location>
        <begin position="823"/>
        <end position="832"/>
    </location>
</feature>
<feature type="compositionally biased region" description="Low complexity" evidence="4">
    <location>
        <begin position="846"/>
        <end position="861"/>
    </location>
</feature>
<keyword id="KW-1003">Cell membrane</keyword>
<keyword id="KW-0963">Cytoplasm</keyword>
<keyword id="KW-0217">Developmental protein</keyword>
<keyword id="KW-0472">Membrane</keyword>
<keyword id="KW-0479">Metal-binding</keyword>
<keyword id="KW-0539">Nucleus</keyword>
<keyword id="KW-1185">Reference proteome</keyword>
<keyword id="KW-0879">Wnt signaling pathway</keyword>
<comment type="function">
    <text evidence="1">Cell autonomous antagonist of the canonical Wnt signaling pathway. May activate a second Wnt signaling pathway that controls planar cell polarity. Required for neuroblast specification (By similarity).</text>
</comment>
<comment type="subcellular location">
    <subcellularLocation>
        <location evidence="2">Cell membrane</location>
    </subcellularLocation>
    <subcellularLocation>
        <location evidence="2">Cytoplasm</location>
    </subcellularLocation>
    <subcellularLocation>
        <location evidence="2">Nucleus</location>
    </subcellularLocation>
</comment>
<comment type="similarity">
    <text evidence="5">Belongs to the NKD family.</text>
</comment>
<organism>
    <name type="scientific">Anopheles gambiae</name>
    <name type="common">African malaria mosquito</name>
    <dbReference type="NCBI Taxonomy" id="7165"/>
    <lineage>
        <taxon>Eukaryota</taxon>
        <taxon>Metazoa</taxon>
        <taxon>Ecdysozoa</taxon>
        <taxon>Arthropoda</taxon>
        <taxon>Hexapoda</taxon>
        <taxon>Insecta</taxon>
        <taxon>Pterygota</taxon>
        <taxon>Neoptera</taxon>
        <taxon>Endopterygota</taxon>
        <taxon>Diptera</taxon>
        <taxon>Nematocera</taxon>
        <taxon>Culicoidea</taxon>
        <taxon>Culicidae</taxon>
        <taxon>Anophelinae</taxon>
        <taxon>Anopheles</taxon>
    </lineage>
</organism>
<sequence length="886" mass="96858">MAGNIVKWWKHKILGGYKQFTVLQECATDSEELIYPGRAPSACSAPPDLLLTSDREQMLKVKSSASTGSGTGQTKTSFQHSHHHHHHGHHHQSPSSNGHNHSGTSHQQQQQQQHHHHHKSQKDAFRKCTNGKAGGGNATAGGASGAGATNTINTTAATIRSDPDRVRLEEFTCDVSLEDGKKPQPLQFSFTLYDLDGHGKITKDDIAGIVSTIYESIGKSVVVPHYGSKTINVRLTVSPDGKTATTKPASAAVKKAIITPRRRYRSRKLISDDDGSDTSENCPRLLRNRTAATAVTNNGETANNNQAALQNQQQQQQQQHHHHHHHHSNGSSGKLKESNLSKATALAGDNQVNRSIGLSNSSEGSSAVGQLLVEAYHKNNLSPGAANAGAGKGVLNNAPNATKSKANENVYESINNLKCCNLQQQQQQHTASNNTSLQTTASSLPVTATGLNQSTTSTAALICHDCVDGGAPTTTLLPPLSTLETVVIPAPSAGVTGRAKRKLVRKTRASRKTAIAAKMMSEDFARRPRARSLSVGNENCYENVIGRMAAAQEECWKSSLCRRELIEIIRESMVKNSLCFQPNRRKEHHRLAAAVGATRSTQPTPVKLSTALLNQQYPNLSAEQKLTRSINQVEQWLDHRSPKLVPKVKLADDMQLQRTVVSRPLKRSKSKEELTPSNLLLLENLKISEDIAEIAVVTPKKVYNKESLIASATKKNIKTHHQHQHSPSRQPTAVPTVAIGAEKPSAPLTVVNKQSIPVGDAQLVQLQYGSVPINADPSECENLIRMSDDGEDVEQHQHQQHQQQQQTAPMAATKHSYRHHQPQSRSQPQSPQHHQHHHQQEPRYCGSGRAHSVSSASAASTTAVHRYVHEHIHHHYHHFENDPDES</sequence>
<accession>Q08AA9</accession>
<accession>A7UV48</accession>
<name>NKD_ANOGA</name>
<gene>
    <name type="primary">nkd</name>
    <name type="ORF">AGAP009925</name>
</gene>
<dbReference type="EMBL" id="AAAB01008980">
    <property type="protein sequence ID" value="EDO63442.1"/>
    <property type="molecule type" value="Genomic_DNA"/>
</dbReference>
<dbReference type="EMBL" id="BK005845">
    <property type="protein sequence ID" value="DAA05784.1"/>
    <property type="molecule type" value="mRNA"/>
</dbReference>
<dbReference type="RefSeq" id="XP_001689169.1">
    <property type="nucleotide sequence ID" value="XM_001689117.1"/>
</dbReference>
<dbReference type="FunCoup" id="Q08AA9">
    <property type="interactions" value="166"/>
</dbReference>
<dbReference type="STRING" id="7165.Q08AA9"/>
<dbReference type="PaxDb" id="7165-AGAP009925-PA"/>
<dbReference type="VEuPathDB" id="VectorBase:AGAMI1_003526"/>
<dbReference type="VEuPathDB" id="VectorBase:AGAP009925"/>
<dbReference type="eggNOG" id="ENOG502QT1X">
    <property type="taxonomic scope" value="Eukaryota"/>
</dbReference>
<dbReference type="HOGENOM" id="CLU_325475_0_0_1"/>
<dbReference type="InParanoid" id="Q08AA9"/>
<dbReference type="OMA" id="EQHTPDN"/>
<dbReference type="PhylomeDB" id="Q08AA9"/>
<dbReference type="Proteomes" id="UP000007062">
    <property type="component" value="Chromosome 3R"/>
</dbReference>
<dbReference type="GO" id="GO:0005737">
    <property type="term" value="C:cytoplasm"/>
    <property type="evidence" value="ECO:0000318"/>
    <property type="project" value="GO_Central"/>
</dbReference>
<dbReference type="GO" id="GO:0005634">
    <property type="term" value="C:nucleus"/>
    <property type="evidence" value="ECO:0007669"/>
    <property type="project" value="UniProtKB-SubCell"/>
</dbReference>
<dbReference type="GO" id="GO:0005886">
    <property type="term" value="C:plasma membrane"/>
    <property type="evidence" value="ECO:0007669"/>
    <property type="project" value="UniProtKB-SubCell"/>
</dbReference>
<dbReference type="GO" id="GO:0005509">
    <property type="term" value="F:calcium ion binding"/>
    <property type="evidence" value="ECO:0007669"/>
    <property type="project" value="InterPro"/>
</dbReference>
<dbReference type="GO" id="GO:0090090">
    <property type="term" value="P:negative regulation of canonical Wnt signaling pathway"/>
    <property type="evidence" value="ECO:0007669"/>
    <property type="project" value="UniProtKB-ARBA"/>
</dbReference>
<dbReference type="GO" id="GO:0030178">
    <property type="term" value="P:negative regulation of Wnt signaling pathway"/>
    <property type="evidence" value="ECO:0000318"/>
    <property type="project" value="GO_Central"/>
</dbReference>
<dbReference type="GO" id="GO:0016055">
    <property type="term" value="P:Wnt signaling pathway"/>
    <property type="evidence" value="ECO:0007669"/>
    <property type="project" value="UniProtKB-KW"/>
</dbReference>
<dbReference type="Gene3D" id="1.10.238.10">
    <property type="entry name" value="EF-hand"/>
    <property type="match status" value="1"/>
</dbReference>
<dbReference type="InterPro" id="IPR011992">
    <property type="entry name" value="EF-hand-dom_pair"/>
</dbReference>
<dbReference type="InterPro" id="IPR002048">
    <property type="entry name" value="EF_hand_dom"/>
</dbReference>
<dbReference type="InterPro" id="IPR040140">
    <property type="entry name" value="Nkd-like"/>
</dbReference>
<dbReference type="PANTHER" id="PTHR22611">
    <property type="entry name" value="PROTEIN NAKED CUTICLE"/>
    <property type="match status" value="1"/>
</dbReference>
<dbReference type="PANTHER" id="PTHR22611:SF9">
    <property type="entry name" value="PROTEIN NAKED CUTICLE"/>
    <property type="match status" value="1"/>
</dbReference>
<dbReference type="SUPFAM" id="SSF47473">
    <property type="entry name" value="EF-hand"/>
    <property type="match status" value="1"/>
</dbReference>
<dbReference type="PROSITE" id="PS50222">
    <property type="entry name" value="EF_HAND_2"/>
    <property type="match status" value="1"/>
</dbReference>
<reference key="1">
    <citation type="journal article" date="2002" name="Science">
        <title>The genome sequence of the malaria mosquito Anopheles gambiae.</title>
        <authorList>
            <person name="Holt R.A."/>
            <person name="Subramanian G.M."/>
            <person name="Halpern A."/>
            <person name="Sutton G.G."/>
            <person name="Charlab R."/>
            <person name="Nusskern D.R."/>
            <person name="Wincker P."/>
            <person name="Clark A.G."/>
            <person name="Ribeiro J.M.C."/>
            <person name="Wides R."/>
            <person name="Salzberg S.L."/>
            <person name="Loftus B.J."/>
            <person name="Yandell M.D."/>
            <person name="Majoros W.H."/>
            <person name="Rusch D.B."/>
            <person name="Lai Z."/>
            <person name="Kraft C.L."/>
            <person name="Abril J.F."/>
            <person name="Anthouard V."/>
            <person name="Arensburger P."/>
            <person name="Atkinson P.W."/>
            <person name="Baden H."/>
            <person name="de Berardinis V."/>
            <person name="Baldwin D."/>
            <person name="Benes V."/>
            <person name="Biedler J."/>
            <person name="Blass C."/>
            <person name="Bolanos R."/>
            <person name="Boscus D."/>
            <person name="Barnstead M."/>
            <person name="Cai S."/>
            <person name="Center A."/>
            <person name="Chaturverdi K."/>
            <person name="Christophides G.K."/>
            <person name="Chrystal M.A.M."/>
            <person name="Clamp M."/>
            <person name="Cravchik A."/>
            <person name="Curwen V."/>
            <person name="Dana A."/>
            <person name="Delcher A."/>
            <person name="Dew I."/>
            <person name="Evans C.A."/>
            <person name="Flanigan M."/>
            <person name="Grundschober-Freimoser A."/>
            <person name="Friedli L."/>
            <person name="Gu Z."/>
            <person name="Guan P."/>
            <person name="Guigo R."/>
            <person name="Hillenmeyer M.E."/>
            <person name="Hladun S.L."/>
            <person name="Hogan J.R."/>
            <person name="Hong Y.S."/>
            <person name="Hoover J."/>
            <person name="Jaillon O."/>
            <person name="Ke Z."/>
            <person name="Kodira C.D."/>
            <person name="Kokoza E."/>
            <person name="Koutsos A."/>
            <person name="Letunic I."/>
            <person name="Levitsky A.A."/>
            <person name="Liang Y."/>
            <person name="Lin J.-J."/>
            <person name="Lobo N.F."/>
            <person name="Lopez J.R."/>
            <person name="Malek J.A."/>
            <person name="McIntosh T.C."/>
            <person name="Meister S."/>
            <person name="Miller J.R."/>
            <person name="Mobarry C."/>
            <person name="Mongin E."/>
            <person name="Murphy S.D."/>
            <person name="O'Brochta D.A."/>
            <person name="Pfannkoch C."/>
            <person name="Qi R."/>
            <person name="Regier M.A."/>
            <person name="Remington K."/>
            <person name="Shao H."/>
            <person name="Sharakhova M.V."/>
            <person name="Sitter C.D."/>
            <person name="Shetty J."/>
            <person name="Smith T.J."/>
            <person name="Strong R."/>
            <person name="Sun J."/>
            <person name="Thomasova D."/>
            <person name="Ton L.Q."/>
            <person name="Topalis P."/>
            <person name="Tu Z.J."/>
            <person name="Unger M.F."/>
            <person name="Walenz B."/>
            <person name="Wang A.H."/>
            <person name="Wang J."/>
            <person name="Wang M."/>
            <person name="Wang X."/>
            <person name="Woodford K.J."/>
            <person name="Wortman J.R."/>
            <person name="Wu M."/>
            <person name="Yao A."/>
            <person name="Zdobnov E.M."/>
            <person name="Zhang H."/>
            <person name="Zhao Q."/>
            <person name="Zhao S."/>
            <person name="Zhu S.C."/>
            <person name="Zhimulev I."/>
            <person name="Coluzzi M."/>
            <person name="della Torre A."/>
            <person name="Roth C.W."/>
            <person name="Louis C."/>
            <person name="Kalush F."/>
            <person name="Mural R.J."/>
            <person name="Myers E.W."/>
            <person name="Adams M.D."/>
            <person name="Smith H.O."/>
            <person name="Broder S."/>
            <person name="Gardner M.J."/>
            <person name="Fraser C.M."/>
            <person name="Birney E."/>
            <person name="Bork P."/>
            <person name="Brey P.T."/>
            <person name="Venter J.C."/>
            <person name="Weissenbach J."/>
            <person name="Kafatos F.C."/>
            <person name="Collins F.H."/>
            <person name="Hoffman S.L."/>
        </authorList>
    </citation>
    <scope>NUCLEOTIDE SEQUENCE [LARGE SCALE GENOMIC DNA]</scope>
    <source>
        <strain>PEST</strain>
    </source>
</reference>
<reference key="2">
    <citation type="journal article" date="2006" name="Genetics">
        <title>An unconventional nuclear localization motif is crucial for function of the Drosophila Wnt/wingless antagonist Naked cuticle.</title>
        <authorList>
            <person name="Waldrop S."/>
            <person name="Chan C.-C."/>
            <person name="Cagatay T."/>
            <person name="Zhang S."/>
            <person name="Rousset R."/>
            <person name="Mack J.A."/>
            <person name="Zeng W."/>
            <person name="Fish M.P."/>
            <person name="Zhang M."/>
            <person name="Amanai M."/>
            <person name="Wharton K.A. Jr."/>
        </authorList>
    </citation>
    <scope>IDENTIFICATION</scope>
</reference>